<organism>
    <name type="scientific">Escherichia coli O157:H7</name>
    <dbReference type="NCBI Taxonomy" id="83334"/>
    <lineage>
        <taxon>Bacteria</taxon>
        <taxon>Pseudomonadati</taxon>
        <taxon>Pseudomonadota</taxon>
        <taxon>Gammaproteobacteria</taxon>
        <taxon>Enterobacterales</taxon>
        <taxon>Enterobacteriaceae</taxon>
        <taxon>Escherichia</taxon>
    </lineage>
</organism>
<accession>P0A7H8</accession>
<accession>P12727</accession>
<reference key="1">
    <citation type="journal article" date="2001" name="Nature">
        <title>Genome sequence of enterohaemorrhagic Escherichia coli O157:H7.</title>
        <authorList>
            <person name="Perna N.T."/>
            <person name="Plunkett G. III"/>
            <person name="Burland V."/>
            <person name="Mau B."/>
            <person name="Glasner J.D."/>
            <person name="Rose D.J."/>
            <person name="Mayhew G.F."/>
            <person name="Evans P.S."/>
            <person name="Gregor J."/>
            <person name="Kirkpatrick H.A."/>
            <person name="Posfai G."/>
            <person name="Hackett J."/>
            <person name="Klink S."/>
            <person name="Boutin A."/>
            <person name="Shao Y."/>
            <person name="Miller L."/>
            <person name="Grotbeck E.J."/>
            <person name="Davis N.W."/>
            <person name="Lim A."/>
            <person name="Dimalanta E.T."/>
            <person name="Potamousis K."/>
            <person name="Apodaca J."/>
            <person name="Anantharaman T.S."/>
            <person name="Lin J."/>
            <person name="Yen G."/>
            <person name="Schwartz D.C."/>
            <person name="Welch R.A."/>
            <person name="Blattner F.R."/>
        </authorList>
    </citation>
    <scope>NUCLEOTIDE SEQUENCE [LARGE SCALE GENOMIC DNA]</scope>
    <source>
        <strain>O157:H7 / EDL933 / ATCC 700927 / EHEC</strain>
    </source>
</reference>
<reference key="2">
    <citation type="journal article" date="2001" name="DNA Res.">
        <title>Complete genome sequence of enterohemorrhagic Escherichia coli O157:H7 and genomic comparison with a laboratory strain K-12.</title>
        <authorList>
            <person name="Hayashi T."/>
            <person name="Makino K."/>
            <person name="Ohnishi M."/>
            <person name="Kurokawa K."/>
            <person name="Ishii K."/>
            <person name="Yokoyama K."/>
            <person name="Han C.-G."/>
            <person name="Ohtsubo E."/>
            <person name="Nakayama K."/>
            <person name="Murata T."/>
            <person name="Tanaka M."/>
            <person name="Tobe T."/>
            <person name="Iida T."/>
            <person name="Takami H."/>
            <person name="Honda T."/>
            <person name="Sasakawa C."/>
            <person name="Ogasawara N."/>
            <person name="Yasunaga T."/>
            <person name="Kuhara S."/>
            <person name="Shiba T."/>
            <person name="Hattori M."/>
            <person name="Shinagawa H."/>
        </authorList>
    </citation>
    <scope>NUCLEOTIDE SEQUENCE [LARGE SCALE GENOMIC DNA]</scope>
    <source>
        <strain>O157:H7 / Sakai / RIMD 0509952 / EHEC</strain>
    </source>
</reference>
<keyword id="KW-0227">DNA damage</keyword>
<keyword id="KW-0233">DNA recombination</keyword>
<keyword id="KW-0234">DNA repair</keyword>
<keyword id="KW-0479">Metal-binding</keyword>
<keyword id="KW-1185">Reference proteome</keyword>
<keyword id="KW-0862">Zinc</keyword>
<keyword id="KW-0863">Zinc-finger</keyword>
<gene>
    <name evidence="1" type="primary">recR</name>
    <name type="ordered locus">Z0589</name>
    <name type="ordered locus">ECs0525</name>
</gene>
<sequence length="201" mass="21963">MQTSPLLTQLMEALRCLPGVGPKSAQRMAFTLLQRDRSGGMRLAQALTRAMSEIGHCADCRTFTEQEVCNICSNPRRQENGQICVVESPADIYAIEQTGQFSGRYFVLMGHLSPLDGIGPDDIGLDRLEQRLAEEKITEVILATNPTVEGEATANYIAELCAQYDVEASRIAHGVPVGGELEMVDGTTLSHSLAGRHKIRF</sequence>
<proteinExistence type="inferred from homology"/>
<dbReference type="EMBL" id="AE005174">
    <property type="protein sequence ID" value="AAG54821.1"/>
    <property type="molecule type" value="Genomic_DNA"/>
</dbReference>
<dbReference type="EMBL" id="BA000007">
    <property type="protein sequence ID" value="BAB33948.1"/>
    <property type="molecule type" value="Genomic_DNA"/>
</dbReference>
<dbReference type="PIR" id="A85545">
    <property type="entry name" value="A85545"/>
</dbReference>
<dbReference type="PIR" id="E90694">
    <property type="entry name" value="E90694"/>
</dbReference>
<dbReference type="RefSeq" id="NP_308552.1">
    <property type="nucleotide sequence ID" value="NC_002695.1"/>
</dbReference>
<dbReference type="RefSeq" id="WP_001195025.1">
    <property type="nucleotide sequence ID" value="NZ_VOAI01000005.1"/>
</dbReference>
<dbReference type="SMR" id="P0A7H8"/>
<dbReference type="STRING" id="155864.Z0589"/>
<dbReference type="GeneID" id="914629"/>
<dbReference type="GeneID" id="93776978"/>
<dbReference type="KEGG" id="ece:Z0589"/>
<dbReference type="KEGG" id="ecs:ECs_0525"/>
<dbReference type="PATRIC" id="fig|386585.9.peg.631"/>
<dbReference type="eggNOG" id="COG0353">
    <property type="taxonomic scope" value="Bacteria"/>
</dbReference>
<dbReference type="HOGENOM" id="CLU_060739_1_2_6"/>
<dbReference type="OMA" id="DVMAIEN"/>
<dbReference type="Proteomes" id="UP000000558">
    <property type="component" value="Chromosome"/>
</dbReference>
<dbReference type="Proteomes" id="UP000002519">
    <property type="component" value="Chromosome"/>
</dbReference>
<dbReference type="GO" id="GO:0003677">
    <property type="term" value="F:DNA binding"/>
    <property type="evidence" value="ECO:0007669"/>
    <property type="project" value="UniProtKB-UniRule"/>
</dbReference>
<dbReference type="GO" id="GO:0008270">
    <property type="term" value="F:zinc ion binding"/>
    <property type="evidence" value="ECO:0007669"/>
    <property type="project" value="UniProtKB-KW"/>
</dbReference>
<dbReference type="GO" id="GO:0006310">
    <property type="term" value="P:DNA recombination"/>
    <property type="evidence" value="ECO:0007669"/>
    <property type="project" value="UniProtKB-UniRule"/>
</dbReference>
<dbReference type="GO" id="GO:0006281">
    <property type="term" value="P:DNA repair"/>
    <property type="evidence" value="ECO:0007669"/>
    <property type="project" value="UniProtKB-UniRule"/>
</dbReference>
<dbReference type="CDD" id="cd01025">
    <property type="entry name" value="TOPRIM_recR"/>
    <property type="match status" value="1"/>
</dbReference>
<dbReference type="FunFam" id="1.10.8.420:FF:000001">
    <property type="entry name" value="Recombination protein RecR"/>
    <property type="match status" value="1"/>
</dbReference>
<dbReference type="FunFam" id="3.40.1360.10:FF:000001">
    <property type="entry name" value="Recombination protein RecR"/>
    <property type="match status" value="1"/>
</dbReference>
<dbReference type="Gene3D" id="3.40.1360.10">
    <property type="match status" value="1"/>
</dbReference>
<dbReference type="Gene3D" id="6.10.250.240">
    <property type="match status" value="1"/>
</dbReference>
<dbReference type="Gene3D" id="1.10.8.420">
    <property type="entry name" value="RecR Domain 1"/>
    <property type="match status" value="1"/>
</dbReference>
<dbReference type="HAMAP" id="MF_00017">
    <property type="entry name" value="RecR"/>
    <property type="match status" value="1"/>
</dbReference>
<dbReference type="InterPro" id="IPR000093">
    <property type="entry name" value="DNA_Rcmb_RecR"/>
</dbReference>
<dbReference type="InterPro" id="IPR023627">
    <property type="entry name" value="Rcmb_RecR"/>
</dbReference>
<dbReference type="InterPro" id="IPR015967">
    <property type="entry name" value="Rcmb_RecR_Znf"/>
</dbReference>
<dbReference type="InterPro" id="IPR006171">
    <property type="entry name" value="TOPRIM_dom"/>
</dbReference>
<dbReference type="InterPro" id="IPR034137">
    <property type="entry name" value="TOPRIM_RecR"/>
</dbReference>
<dbReference type="NCBIfam" id="TIGR00615">
    <property type="entry name" value="recR"/>
    <property type="match status" value="1"/>
</dbReference>
<dbReference type="PANTHER" id="PTHR30446">
    <property type="entry name" value="RECOMBINATION PROTEIN RECR"/>
    <property type="match status" value="1"/>
</dbReference>
<dbReference type="PANTHER" id="PTHR30446:SF0">
    <property type="entry name" value="RECOMBINATION PROTEIN RECR"/>
    <property type="match status" value="1"/>
</dbReference>
<dbReference type="Pfam" id="PF21175">
    <property type="entry name" value="RecR_C"/>
    <property type="match status" value="1"/>
</dbReference>
<dbReference type="Pfam" id="PF21176">
    <property type="entry name" value="RecR_HhH"/>
    <property type="match status" value="1"/>
</dbReference>
<dbReference type="Pfam" id="PF02132">
    <property type="entry name" value="RecR_ZnF"/>
    <property type="match status" value="1"/>
</dbReference>
<dbReference type="Pfam" id="PF13662">
    <property type="entry name" value="Toprim_4"/>
    <property type="match status" value="1"/>
</dbReference>
<dbReference type="SMART" id="SM00493">
    <property type="entry name" value="TOPRIM"/>
    <property type="match status" value="1"/>
</dbReference>
<dbReference type="SUPFAM" id="SSF111304">
    <property type="entry name" value="Recombination protein RecR"/>
    <property type="match status" value="1"/>
</dbReference>
<dbReference type="PROSITE" id="PS01300">
    <property type="entry name" value="RECR"/>
    <property type="match status" value="1"/>
</dbReference>
<dbReference type="PROSITE" id="PS50880">
    <property type="entry name" value="TOPRIM"/>
    <property type="match status" value="1"/>
</dbReference>
<name>RECR_ECO57</name>
<feature type="chain" id="PRO_0000190318" description="Recombination protein RecR">
    <location>
        <begin position="1"/>
        <end position="201"/>
    </location>
</feature>
<feature type="domain" description="Toprim" evidence="1">
    <location>
        <begin position="81"/>
        <end position="176"/>
    </location>
</feature>
<feature type="zinc finger region" description="C4-type" evidence="1">
    <location>
        <begin position="57"/>
        <end position="72"/>
    </location>
</feature>
<comment type="function">
    <text evidence="1">May play a role in DNA repair. It seems to be involved in an RecBC-independent recombinational process of DNA repair. It may act with RecF and RecO.</text>
</comment>
<comment type="similarity">
    <text evidence="1">Belongs to the RecR family.</text>
</comment>
<protein>
    <recommendedName>
        <fullName evidence="1">Recombination protein RecR</fullName>
    </recommendedName>
</protein>
<evidence type="ECO:0000255" key="1">
    <source>
        <dbReference type="HAMAP-Rule" id="MF_00017"/>
    </source>
</evidence>